<evidence type="ECO:0000255" key="1">
    <source>
        <dbReference type="HAMAP-Rule" id="MF_00145"/>
    </source>
</evidence>
<proteinExistence type="inferred from homology"/>
<comment type="catalytic activity">
    <reaction evidence="1">
        <text>(2R)-3-phosphoglycerate + ATP = (2R)-3-phospho-glyceroyl phosphate + ADP</text>
        <dbReference type="Rhea" id="RHEA:14801"/>
        <dbReference type="ChEBI" id="CHEBI:30616"/>
        <dbReference type="ChEBI" id="CHEBI:57604"/>
        <dbReference type="ChEBI" id="CHEBI:58272"/>
        <dbReference type="ChEBI" id="CHEBI:456216"/>
        <dbReference type="EC" id="2.7.2.3"/>
    </reaction>
</comment>
<comment type="pathway">
    <text evidence="1">Carbohydrate degradation; glycolysis; pyruvate from D-glyceraldehyde 3-phosphate: step 2/5.</text>
</comment>
<comment type="subunit">
    <text evidence="1">Monomer.</text>
</comment>
<comment type="subcellular location">
    <subcellularLocation>
        <location evidence="1">Cytoplasm</location>
    </subcellularLocation>
</comment>
<comment type="similarity">
    <text evidence="1">Belongs to the phosphoglycerate kinase family.</text>
</comment>
<dbReference type="EC" id="2.7.2.3" evidence="1"/>
<dbReference type="EMBL" id="CP000103">
    <property type="protein sequence ID" value="ABB73694.1"/>
    <property type="molecule type" value="Genomic_DNA"/>
</dbReference>
<dbReference type="RefSeq" id="WP_011379748.1">
    <property type="nucleotide sequence ID" value="NC_007614.1"/>
</dbReference>
<dbReference type="SMR" id="Q2YC27"/>
<dbReference type="STRING" id="323848.Nmul_A0386"/>
<dbReference type="KEGG" id="nmu:Nmul_A0386"/>
<dbReference type="eggNOG" id="COG0126">
    <property type="taxonomic scope" value="Bacteria"/>
</dbReference>
<dbReference type="HOGENOM" id="CLU_025427_0_2_4"/>
<dbReference type="OrthoDB" id="9808460at2"/>
<dbReference type="UniPathway" id="UPA00109">
    <property type="reaction ID" value="UER00185"/>
</dbReference>
<dbReference type="Proteomes" id="UP000002718">
    <property type="component" value="Chromosome"/>
</dbReference>
<dbReference type="GO" id="GO:0005829">
    <property type="term" value="C:cytosol"/>
    <property type="evidence" value="ECO:0007669"/>
    <property type="project" value="TreeGrafter"/>
</dbReference>
<dbReference type="GO" id="GO:0043531">
    <property type="term" value="F:ADP binding"/>
    <property type="evidence" value="ECO:0007669"/>
    <property type="project" value="TreeGrafter"/>
</dbReference>
<dbReference type="GO" id="GO:0005524">
    <property type="term" value="F:ATP binding"/>
    <property type="evidence" value="ECO:0007669"/>
    <property type="project" value="UniProtKB-KW"/>
</dbReference>
<dbReference type="GO" id="GO:0004618">
    <property type="term" value="F:phosphoglycerate kinase activity"/>
    <property type="evidence" value="ECO:0007669"/>
    <property type="project" value="UniProtKB-UniRule"/>
</dbReference>
<dbReference type="GO" id="GO:0006094">
    <property type="term" value="P:gluconeogenesis"/>
    <property type="evidence" value="ECO:0007669"/>
    <property type="project" value="TreeGrafter"/>
</dbReference>
<dbReference type="GO" id="GO:0006096">
    <property type="term" value="P:glycolytic process"/>
    <property type="evidence" value="ECO:0007669"/>
    <property type="project" value="UniProtKB-UniRule"/>
</dbReference>
<dbReference type="FunFam" id="3.40.50.1260:FF:000001">
    <property type="entry name" value="Phosphoglycerate kinase"/>
    <property type="match status" value="1"/>
</dbReference>
<dbReference type="FunFam" id="3.40.50.1260:FF:000002">
    <property type="entry name" value="Phosphoglycerate kinase"/>
    <property type="match status" value="1"/>
</dbReference>
<dbReference type="Gene3D" id="3.40.50.1260">
    <property type="entry name" value="Phosphoglycerate kinase, N-terminal domain"/>
    <property type="match status" value="2"/>
</dbReference>
<dbReference type="HAMAP" id="MF_00145">
    <property type="entry name" value="Phosphoglyc_kinase"/>
    <property type="match status" value="1"/>
</dbReference>
<dbReference type="InterPro" id="IPR001576">
    <property type="entry name" value="Phosphoglycerate_kinase"/>
</dbReference>
<dbReference type="InterPro" id="IPR015911">
    <property type="entry name" value="Phosphoglycerate_kinase_CS"/>
</dbReference>
<dbReference type="InterPro" id="IPR015824">
    <property type="entry name" value="Phosphoglycerate_kinase_N"/>
</dbReference>
<dbReference type="InterPro" id="IPR036043">
    <property type="entry name" value="Phosphoglycerate_kinase_sf"/>
</dbReference>
<dbReference type="PANTHER" id="PTHR11406">
    <property type="entry name" value="PHOSPHOGLYCERATE KINASE"/>
    <property type="match status" value="1"/>
</dbReference>
<dbReference type="PANTHER" id="PTHR11406:SF23">
    <property type="entry name" value="PHOSPHOGLYCERATE KINASE 1, CHLOROPLASTIC-RELATED"/>
    <property type="match status" value="1"/>
</dbReference>
<dbReference type="Pfam" id="PF00162">
    <property type="entry name" value="PGK"/>
    <property type="match status" value="1"/>
</dbReference>
<dbReference type="PIRSF" id="PIRSF000724">
    <property type="entry name" value="Pgk"/>
    <property type="match status" value="1"/>
</dbReference>
<dbReference type="PRINTS" id="PR00477">
    <property type="entry name" value="PHGLYCKINASE"/>
</dbReference>
<dbReference type="SUPFAM" id="SSF53748">
    <property type="entry name" value="Phosphoglycerate kinase"/>
    <property type="match status" value="1"/>
</dbReference>
<dbReference type="PROSITE" id="PS00111">
    <property type="entry name" value="PGLYCERATE_KINASE"/>
    <property type="match status" value="1"/>
</dbReference>
<accession>Q2YC27</accession>
<sequence>MSVIRVTDLDLKGKRVFIRADLNVPVKDGKVTSDARISASMGTIDYCLKQGGKVMVTSHLGRPEEGVWSEENSLKPVADNISERLGKPARLIKDWVDGNFDVAEGELVILENCRFNKGEKKNADETAQKYAKLCDVFVMDAFGTAHRAEASTYGIAKYAPVACAGILLTEELDALTKALLNPARPMVAIVGGSKVSTKLTVLESLSEKVDQLVVGGGIANTFLKAAGQNVGKSLCEDDLVPIAKMLMEKMAKRNATIPIAVDVVVGKKFDASEPAVLKNADAVTDDDMIFDIGPKSARELSDIIMKAGTVVWNGPVGVFEFDQFGEGTKTIAMAIADTDAFTLAGGGDTIAAIQKYDIYDRVSYISTAGGAFLEFLEGKKLPAVEILEQRAAGSR</sequence>
<protein>
    <recommendedName>
        <fullName evidence="1">Phosphoglycerate kinase</fullName>
        <ecNumber evidence="1">2.7.2.3</ecNumber>
    </recommendedName>
</protein>
<keyword id="KW-0067">ATP-binding</keyword>
<keyword id="KW-0963">Cytoplasm</keyword>
<keyword id="KW-0324">Glycolysis</keyword>
<keyword id="KW-0418">Kinase</keyword>
<keyword id="KW-0547">Nucleotide-binding</keyword>
<keyword id="KW-1185">Reference proteome</keyword>
<keyword id="KW-0808">Transferase</keyword>
<organism>
    <name type="scientific">Nitrosospira multiformis (strain ATCC 25196 / NCIMB 11849 / C 71)</name>
    <dbReference type="NCBI Taxonomy" id="323848"/>
    <lineage>
        <taxon>Bacteria</taxon>
        <taxon>Pseudomonadati</taxon>
        <taxon>Pseudomonadota</taxon>
        <taxon>Betaproteobacteria</taxon>
        <taxon>Nitrosomonadales</taxon>
        <taxon>Nitrosomonadaceae</taxon>
        <taxon>Nitrosospira</taxon>
    </lineage>
</organism>
<name>PGK_NITMU</name>
<gene>
    <name evidence="1" type="primary">pgk</name>
    <name type="ordered locus">Nmul_A0386</name>
</gene>
<reference key="1">
    <citation type="submission" date="2005-08" db="EMBL/GenBank/DDBJ databases">
        <title>Complete sequence of chromosome 1 of Nitrosospira multiformis ATCC 25196.</title>
        <authorList>
            <person name="Copeland A."/>
            <person name="Lucas S."/>
            <person name="Lapidus A."/>
            <person name="Barry K."/>
            <person name="Detter J.C."/>
            <person name="Glavina T."/>
            <person name="Hammon N."/>
            <person name="Israni S."/>
            <person name="Pitluck S."/>
            <person name="Chain P."/>
            <person name="Malfatti S."/>
            <person name="Shin M."/>
            <person name="Vergez L."/>
            <person name="Schmutz J."/>
            <person name="Larimer F."/>
            <person name="Land M."/>
            <person name="Hauser L."/>
            <person name="Kyrpides N."/>
            <person name="Lykidis A."/>
            <person name="Richardson P."/>
        </authorList>
    </citation>
    <scope>NUCLEOTIDE SEQUENCE [LARGE SCALE GENOMIC DNA]</scope>
    <source>
        <strain>ATCC 25196 / NCIMB 11849 / C 71</strain>
    </source>
</reference>
<feature type="chain" id="PRO_1000058021" description="Phosphoglycerate kinase">
    <location>
        <begin position="1"/>
        <end position="395"/>
    </location>
</feature>
<feature type="binding site" evidence="1">
    <location>
        <begin position="21"/>
        <end position="23"/>
    </location>
    <ligand>
        <name>substrate</name>
    </ligand>
</feature>
<feature type="binding site" evidence="1">
    <location>
        <position position="36"/>
    </location>
    <ligand>
        <name>substrate</name>
    </ligand>
</feature>
<feature type="binding site" evidence="1">
    <location>
        <begin position="59"/>
        <end position="62"/>
    </location>
    <ligand>
        <name>substrate</name>
    </ligand>
</feature>
<feature type="binding site" evidence="1">
    <location>
        <position position="114"/>
    </location>
    <ligand>
        <name>substrate</name>
    </ligand>
</feature>
<feature type="binding site" evidence="1">
    <location>
        <position position="147"/>
    </location>
    <ligand>
        <name>substrate</name>
    </ligand>
</feature>
<feature type="binding site" evidence="1">
    <location>
        <position position="198"/>
    </location>
    <ligand>
        <name>ATP</name>
        <dbReference type="ChEBI" id="CHEBI:30616"/>
    </ligand>
</feature>
<feature type="binding site" evidence="1">
    <location>
        <position position="320"/>
    </location>
    <ligand>
        <name>ATP</name>
        <dbReference type="ChEBI" id="CHEBI:30616"/>
    </ligand>
</feature>
<feature type="binding site" evidence="1">
    <location>
        <begin position="346"/>
        <end position="349"/>
    </location>
    <ligand>
        <name>ATP</name>
        <dbReference type="ChEBI" id="CHEBI:30616"/>
    </ligand>
</feature>